<evidence type="ECO:0000250" key="1"/>
<evidence type="ECO:0000255" key="2"/>
<evidence type="ECO:0000269" key="3">
    <source>
    </source>
</evidence>
<evidence type="ECO:0000305" key="4"/>
<name>CHX8_ARATH</name>
<reference key="1">
    <citation type="journal article" date="2004" name="Plant Physiol.">
        <title>Expression patterns of a novel AtCHX gene family highlight potential roles in osmotic adjustment and K+ homeostasis in pollen development.</title>
        <authorList>
            <person name="Sze H."/>
            <person name="Padmanaban S."/>
            <person name="Cellier F."/>
            <person name="Honys D."/>
            <person name="Cheng N.-H."/>
            <person name="Bock K.W."/>
            <person name="Conejero G."/>
            <person name="Li X."/>
            <person name="Twell D."/>
            <person name="Ward J.M."/>
            <person name="Hirschi K.D."/>
        </authorList>
    </citation>
    <scope>NUCLEOTIDE SEQUENCE [MRNA]</scope>
    <scope>TISSUE SPECIFICITY</scope>
    <scope>GENE FAMILY</scope>
    <scope>NOMENCLATURE</scope>
    <source>
        <tissue>Pollen</tissue>
    </source>
</reference>
<reference key="2">
    <citation type="journal article" date="1999" name="Nature">
        <title>Sequence and analysis of chromosome 2 of the plant Arabidopsis thaliana.</title>
        <authorList>
            <person name="Lin X."/>
            <person name="Kaul S."/>
            <person name="Rounsley S.D."/>
            <person name="Shea T.P."/>
            <person name="Benito M.-I."/>
            <person name="Town C.D."/>
            <person name="Fujii C.Y."/>
            <person name="Mason T.M."/>
            <person name="Bowman C.L."/>
            <person name="Barnstead M.E."/>
            <person name="Feldblyum T.V."/>
            <person name="Buell C.R."/>
            <person name="Ketchum K.A."/>
            <person name="Lee J.J."/>
            <person name="Ronning C.M."/>
            <person name="Koo H.L."/>
            <person name="Moffat K.S."/>
            <person name="Cronin L.A."/>
            <person name="Shen M."/>
            <person name="Pai G."/>
            <person name="Van Aken S."/>
            <person name="Umayam L."/>
            <person name="Tallon L.J."/>
            <person name="Gill J.E."/>
            <person name="Adams M.D."/>
            <person name="Carrera A.J."/>
            <person name="Creasy T.H."/>
            <person name="Goodman H.M."/>
            <person name="Somerville C.R."/>
            <person name="Copenhaver G.P."/>
            <person name="Preuss D."/>
            <person name="Nierman W.C."/>
            <person name="White O."/>
            <person name="Eisen J.A."/>
            <person name="Salzberg S.L."/>
            <person name="Fraser C.M."/>
            <person name="Venter J.C."/>
        </authorList>
    </citation>
    <scope>NUCLEOTIDE SEQUENCE [LARGE SCALE GENOMIC DNA]</scope>
    <source>
        <strain>cv. Columbia</strain>
    </source>
</reference>
<reference key="3">
    <citation type="journal article" date="2017" name="Plant J.">
        <title>Araport11: a complete reannotation of the Arabidopsis thaliana reference genome.</title>
        <authorList>
            <person name="Cheng C.Y."/>
            <person name="Krishnakumar V."/>
            <person name="Chan A.P."/>
            <person name="Thibaud-Nissen F."/>
            <person name="Schobel S."/>
            <person name="Town C.D."/>
        </authorList>
    </citation>
    <scope>GENOME REANNOTATION</scope>
    <source>
        <strain>cv. Columbia</strain>
    </source>
</reference>
<reference key="4">
    <citation type="journal article" date="2001" name="Plant Physiol.">
        <title>Phylogenetic relationships within cation transporter families of Arabidopsis.</title>
        <authorList>
            <person name="Maeser P."/>
            <person name="Thomine S."/>
            <person name="Schroeder J.I."/>
            <person name="Ward J.M."/>
            <person name="Hirschi K."/>
            <person name="Sze H."/>
            <person name="Talke I.N."/>
            <person name="Amtmann A."/>
            <person name="Maathuis F.J.M."/>
            <person name="Sanders D."/>
            <person name="Harper J.F."/>
            <person name="Tchieu J."/>
            <person name="Gribskov M."/>
            <person name="Persans M.W."/>
            <person name="Salt D.E."/>
            <person name="Kim S.A."/>
            <person name="Guerinot M.L."/>
        </authorList>
    </citation>
    <scope>GENE FAMILY</scope>
    <scope>NOMENCLATURE</scope>
</reference>
<feature type="chain" id="PRO_0000394979" description="Cation/H(+) antiporter 8">
    <location>
        <begin position="1"/>
        <end position="816"/>
    </location>
</feature>
<feature type="transmembrane region" description="Helical" evidence="2">
    <location>
        <begin position="64"/>
        <end position="84"/>
    </location>
</feature>
<feature type="transmembrane region" description="Helical" evidence="2">
    <location>
        <begin position="97"/>
        <end position="117"/>
    </location>
</feature>
<feature type="transmembrane region" description="Helical" evidence="2">
    <location>
        <begin position="127"/>
        <end position="147"/>
    </location>
</feature>
<feature type="transmembrane region" description="Helical" evidence="2">
    <location>
        <begin position="163"/>
        <end position="183"/>
    </location>
</feature>
<feature type="transmembrane region" description="Helical" evidence="2">
    <location>
        <begin position="197"/>
        <end position="214"/>
    </location>
</feature>
<feature type="transmembrane region" description="Helical" evidence="2">
    <location>
        <begin position="227"/>
        <end position="247"/>
    </location>
</feature>
<feature type="transmembrane region" description="Helical" evidence="2">
    <location>
        <begin position="255"/>
        <end position="275"/>
    </location>
</feature>
<feature type="transmembrane region" description="Helical" evidence="2">
    <location>
        <begin position="297"/>
        <end position="317"/>
    </location>
</feature>
<feature type="transmembrane region" description="Helical" evidence="2">
    <location>
        <begin position="343"/>
        <end position="363"/>
    </location>
</feature>
<feature type="transmembrane region" description="Helical" evidence="2">
    <location>
        <begin position="382"/>
        <end position="402"/>
    </location>
</feature>
<feature type="transmembrane region" description="Helical" evidence="2">
    <location>
        <begin position="413"/>
        <end position="433"/>
    </location>
</feature>
<feature type="transmembrane region" description="Helical" evidence="2">
    <location>
        <begin position="447"/>
        <end position="467"/>
    </location>
</feature>
<organism>
    <name type="scientific">Arabidopsis thaliana</name>
    <name type="common">Mouse-ear cress</name>
    <dbReference type="NCBI Taxonomy" id="3702"/>
    <lineage>
        <taxon>Eukaryota</taxon>
        <taxon>Viridiplantae</taxon>
        <taxon>Streptophyta</taxon>
        <taxon>Embryophyta</taxon>
        <taxon>Tracheophyta</taxon>
        <taxon>Spermatophyta</taxon>
        <taxon>Magnoliopsida</taxon>
        <taxon>eudicotyledons</taxon>
        <taxon>Gunneridae</taxon>
        <taxon>Pentapetalae</taxon>
        <taxon>rosids</taxon>
        <taxon>malvids</taxon>
        <taxon>Brassicales</taxon>
        <taxon>Brassicaceae</taxon>
        <taxon>Camelineae</taxon>
        <taxon>Arabidopsis</taxon>
    </lineage>
</organism>
<sequence>MGGGDISHMSPEVKWIFEMAWYGETVRYDGLICEEHPPKLSSDGIWEKLIIKSAGLYFWQYRLPKLEIVILLVFFLWQGFNILFKKLGLSIPKLSSMMLAGLLLNVLVTLSGENSIIADILVTKNRIDVAGCLGSFGFLIFWFLKGVRMDVKRIFKAEAKARVTGVAAVTFPIVVGFLLFNLKSAKNRPLTFQEYDVMLLMESITSFSGIARLLRDLGMNHSSIGRVALSSALVSDIVGLLLLIANVSRSSATLADGLAILTEITLFLVIAFAVVRPIMFKIIKRKGEGRPIEDKYIHGVLVLVCLSCMYWEDLSQFPPLGAFFLGLAIPNGPPIGSALVERLESFNFGIILPLFLTAVMLRTDTTAWKGALTFFSGDDKKFAVASLVLLIFLLKLSVSVIVPYLYKMPLRDSIILALIMSHKGIIELSFYLFSLSLKLVTKDTFSILVLSIVLNSLLIPMAIGFLYDPSKQFICYQKRNLASMKNMGELKTLVCIHRPDHISSMINLLEASYQSEDSPLTCYVLHLVELRGQDVPTLISHKVQKLGVGAGNKYSENVILSFEHFHRSVCSSISIDTFTCIANANHMQDDICWLALDKAVTLIILPFHRTWSLDRTSIVSDVEAIRFLNVNVLKQAPCSVGILIERHLVNKKQEPHESLKVCVIFVGGKDDREALAFAKRMARQENVTLTVLRLLASGKSKDATGWDQMLDTVELRELIKSNNAGMVKEETSTIYLEQEILDGADTSMLLRSMAFDYDLFVVGRTCGENHEATKGIENWCEFEELGVIGDFLASPDFPSKTSVLVVQQQRTVANNN</sequence>
<dbReference type="EMBL" id="AY926468">
    <property type="protein sequence ID" value="AAX49540.1"/>
    <property type="molecule type" value="mRNA"/>
</dbReference>
<dbReference type="EMBL" id="AC005851">
    <property type="protein sequence ID" value="AAC98448.1"/>
    <property type="status" value="ALT_SEQ"/>
    <property type="molecule type" value="Genomic_DNA"/>
</dbReference>
<dbReference type="EMBL" id="CP002685">
    <property type="protein sequence ID" value="AEC08088.2"/>
    <property type="molecule type" value="Genomic_DNA"/>
</dbReference>
<dbReference type="PIR" id="G84681">
    <property type="entry name" value="G84681"/>
</dbReference>
<dbReference type="SMR" id="Q58P71"/>
<dbReference type="BioGRID" id="2714">
    <property type="interactions" value="1"/>
</dbReference>
<dbReference type="STRING" id="3702.Q58P71"/>
<dbReference type="TCDB" id="2.A.37.4.4">
    <property type="family name" value="the monovalent cation:proton antiporter-2 (cpa2) family"/>
</dbReference>
<dbReference type="PaxDb" id="3702-AT2G28180.1"/>
<dbReference type="ProteomicsDB" id="246887"/>
<dbReference type="EnsemblPlants" id="AT2G28180.1">
    <property type="protein sequence ID" value="AT2G28180.1"/>
    <property type="gene ID" value="AT2G28180"/>
</dbReference>
<dbReference type="GeneID" id="817364"/>
<dbReference type="Gramene" id="AT2G28180.1">
    <property type="protein sequence ID" value="AT2G28180.1"/>
    <property type="gene ID" value="AT2G28180"/>
</dbReference>
<dbReference type="KEGG" id="ath:AT2G28180"/>
<dbReference type="Araport" id="AT2G28180"/>
<dbReference type="TAIR" id="AT2G28180">
    <property type="gene designation" value="ATCHX8"/>
</dbReference>
<dbReference type="eggNOG" id="KOG1650">
    <property type="taxonomic scope" value="Eukaryota"/>
</dbReference>
<dbReference type="HOGENOM" id="CLU_005126_6_1_1"/>
<dbReference type="InParanoid" id="Q58P71"/>
<dbReference type="OMA" id="CEEHPPK"/>
<dbReference type="PhylomeDB" id="Q58P71"/>
<dbReference type="PRO" id="PR:Q58P71"/>
<dbReference type="Proteomes" id="UP000006548">
    <property type="component" value="Chromosome 2"/>
</dbReference>
<dbReference type="ExpressionAtlas" id="Q58P71">
    <property type="expression patterns" value="baseline and differential"/>
</dbReference>
<dbReference type="GO" id="GO:0016020">
    <property type="term" value="C:membrane"/>
    <property type="evidence" value="ECO:0007669"/>
    <property type="project" value="UniProtKB-SubCell"/>
</dbReference>
<dbReference type="GO" id="GO:0015297">
    <property type="term" value="F:antiporter activity"/>
    <property type="evidence" value="ECO:0007669"/>
    <property type="project" value="UniProtKB-KW"/>
</dbReference>
<dbReference type="GO" id="GO:0006813">
    <property type="term" value="P:potassium ion transport"/>
    <property type="evidence" value="ECO:0007669"/>
    <property type="project" value="UniProtKB-KW"/>
</dbReference>
<dbReference type="GO" id="GO:1902600">
    <property type="term" value="P:proton transmembrane transport"/>
    <property type="evidence" value="ECO:0007669"/>
    <property type="project" value="InterPro"/>
</dbReference>
<dbReference type="Gene3D" id="1.20.1530.20">
    <property type="match status" value="1"/>
</dbReference>
<dbReference type="Gene3D" id="3.40.50.12370">
    <property type="match status" value="1"/>
</dbReference>
<dbReference type="InterPro" id="IPR006153">
    <property type="entry name" value="Cation/H_exchanger_TM"/>
</dbReference>
<dbReference type="InterPro" id="IPR050794">
    <property type="entry name" value="CPA2_transporter"/>
</dbReference>
<dbReference type="InterPro" id="IPR038770">
    <property type="entry name" value="Na+/solute_symporter_sf"/>
</dbReference>
<dbReference type="PANTHER" id="PTHR32468">
    <property type="entry name" value="CATION/H + ANTIPORTER"/>
    <property type="match status" value="1"/>
</dbReference>
<dbReference type="PANTHER" id="PTHR32468:SF93">
    <property type="entry name" value="CATION_H(+) ANTIPORTER 5-RELATED"/>
    <property type="match status" value="1"/>
</dbReference>
<dbReference type="Pfam" id="PF23256">
    <property type="entry name" value="CHX17_2nd"/>
    <property type="match status" value="1"/>
</dbReference>
<dbReference type="Pfam" id="PF23259">
    <property type="entry name" value="CHX17_C"/>
    <property type="match status" value="1"/>
</dbReference>
<dbReference type="Pfam" id="PF00999">
    <property type="entry name" value="Na_H_Exchanger"/>
    <property type="match status" value="1"/>
</dbReference>
<accession>Q58P71</accession>
<accession>F4IHR1</accession>
<accession>Q9ZUW0</accession>
<protein>
    <recommendedName>
        <fullName>Cation/H(+) antiporter 8</fullName>
    </recommendedName>
    <alternativeName>
        <fullName>Protein CATION/H+ EXCHANGER 8</fullName>
        <shortName>AtCHX8</shortName>
    </alternativeName>
</protein>
<keyword id="KW-0050">Antiport</keyword>
<keyword id="KW-0406">Ion transport</keyword>
<keyword id="KW-0472">Membrane</keyword>
<keyword id="KW-0630">Potassium</keyword>
<keyword id="KW-0633">Potassium transport</keyword>
<keyword id="KW-1185">Reference proteome</keyword>
<keyword id="KW-0812">Transmembrane</keyword>
<keyword id="KW-1133">Transmembrane helix</keyword>
<keyword id="KW-0813">Transport</keyword>
<proteinExistence type="evidence at transcript level"/>
<gene>
    <name type="primary">CHX8</name>
    <name type="synonym">CHX08</name>
    <name type="ordered locus">At2g28180</name>
    <name type="ORF">F24D13.3</name>
</gene>
<comment type="function">
    <text evidence="1">May operate as a cation/H(+) antiporter.</text>
</comment>
<comment type="subcellular location">
    <subcellularLocation>
        <location evidence="1">Membrane</location>
        <topology evidence="1">Multi-pass membrane protein</topology>
    </subcellularLocation>
</comment>
<comment type="tissue specificity">
    <text evidence="3">Specifically expressed in pollen.</text>
</comment>
<comment type="similarity">
    <text evidence="4">Belongs to the monovalent cation:proton antiporter 2 (CPA2) transporter (TC 2.A.37) family. CHX (TC 2.A.37.4) subfamily.</text>
</comment>
<comment type="sequence caution" evidence="4">
    <conflict type="erroneous gene model prediction">
        <sequence resource="EMBL-CDS" id="AAC98448"/>
    </conflict>
</comment>